<accession>B3PMJ0</accession>
<keyword id="KW-0227">DNA damage</keyword>
<keyword id="KW-0234">DNA repair</keyword>
<keyword id="KW-0235">DNA replication</keyword>
<keyword id="KW-0436">Ligase</keyword>
<keyword id="KW-0460">Magnesium</keyword>
<keyword id="KW-0464">Manganese</keyword>
<keyword id="KW-0479">Metal-binding</keyword>
<keyword id="KW-0520">NAD</keyword>
<keyword id="KW-1185">Reference proteome</keyword>
<keyword id="KW-0862">Zinc</keyword>
<name>DNLJ_META1</name>
<reference key="1">
    <citation type="journal article" date="2008" name="Infect. Immun.">
        <title>Genome of Mycoplasma arthritidis.</title>
        <authorList>
            <person name="Dybvig K."/>
            <person name="Zuhua C."/>
            <person name="Lao P."/>
            <person name="Jordan D.S."/>
            <person name="French C.T."/>
            <person name="Tu A.H."/>
            <person name="Loraine A.E."/>
        </authorList>
    </citation>
    <scope>NUCLEOTIDE SEQUENCE [LARGE SCALE GENOMIC DNA]</scope>
    <source>
        <strain>158L3-1</strain>
    </source>
</reference>
<organism>
    <name type="scientific">Metamycoplasma arthritidis (strain 158L3-1)</name>
    <name type="common">Mycoplasma arthritidis</name>
    <dbReference type="NCBI Taxonomy" id="243272"/>
    <lineage>
        <taxon>Bacteria</taxon>
        <taxon>Bacillati</taxon>
        <taxon>Mycoplasmatota</taxon>
        <taxon>Mycoplasmoidales</taxon>
        <taxon>Metamycoplasmataceae</taxon>
        <taxon>Metamycoplasma</taxon>
    </lineage>
</organism>
<sequence length="665" mass="75737">MTEKEKIRNEVFELQAKINEWDNAYYNLDAPLVEDAIYDREILKLKKLEEQYSSYFSFEELANSPTQKINAKSSDLFKKVTHDSPMLSLNKAYTEEEIQKFIDNIKKVTPTFSFFLEPKIDGLSISIKYRNGQLFQAVTRGDGLVGEDVTENIKQIKNIPKEIAYQKPLEVRGEVYLALSEFEKINLNFQKENKPLMANPRNAAAGTLRQLDKEIVANRNLSAFLYNIVAPEDHNIFTILEARDFLKNLGFSVTKEATYAKDLSEINSYIENFKHLKKTLDYETDGVVIKLNELQHYDALGATNKFPHSAIAFKYEPNTTTTVLKNIFITVGRTGLVTYNAELEPVILSGSCITFATLNNYQYIKDLKLNKGDLVYIKKAGEIIPCVIGLVNKKHEETEFNKFLKCPYCNSDLIETDTLLEQYCSNENCPEIRRKKIIHFASKKAMELNSLGEKNIDVFINEGLLENVIDFYKLKEKKDKIMSLERFGTKSVMNILKSIEESKKNSLDRVIFGLSIKHIGSKVAYFLASKILKLSNFLDFDFDSLISYNEIGEKIISSLKNWVAKEENKNLVKDLLDNDVDLEFIATKKTERFAQLSFVITGTLSQPRSHFEKLIKENGGSISSAVSAKTSYLLVGEDAGSKLAKARALNVKILDEEAFNELLVS</sequence>
<protein>
    <recommendedName>
        <fullName evidence="1">DNA ligase</fullName>
        <ecNumber evidence="1">6.5.1.2</ecNumber>
    </recommendedName>
    <alternativeName>
        <fullName evidence="1">Polydeoxyribonucleotide synthase [NAD(+)]</fullName>
    </alternativeName>
</protein>
<evidence type="ECO:0000255" key="1">
    <source>
        <dbReference type="HAMAP-Rule" id="MF_01588"/>
    </source>
</evidence>
<dbReference type="EC" id="6.5.1.2" evidence="1"/>
<dbReference type="EMBL" id="CP001047">
    <property type="protein sequence ID" value="ACF07242.1"/>
    <property type="molecule type" value="Genomic_DNA"/>
</dbReference>
<dbReference type="RefSeq" id="WP_012498199.1">
    <property type="nucleotide sequence ID" value="NC_011025.1"/>
</dbReference>
<dbReference type="SMR" id="B3PMJ0"/>
<dbReference type="STRING" id="243272.MARTH_orf373"/>
<dbReference type="KEGG" id="mat:MARTH_orf373"/>
<dbReference type="eggNOG" id="COG0272">
    <property type="taxonomic scope" value="Bacteria"/>
</dbReference>
<dbReference type="HOGENOM" id="CLU_007764_2_0_14"/>
<dbReference type="Proteomes" id="UP000008812">
    <property type="component" value="Chromosome"/>
</dbReference>
<dbReference type="GO" id="GO:0005829">
    <property type="term" value="C:cytosol"/>
    <property type="evidence" value="ECO:0007669"/>
    <property type="project" value="TreeGrafter"/>
</dbReference>
<dbReference type="GO" id="GO:0003911">
    <property type="term" value="F:DNA ligase (NAD+) activity"/>
    <property type="evidence" value="ECO:0007669"/>
    <property type="project" value="UniProtKB-UniRule"/>
</dbReference>
<dbReference type="GO" id="GO:0046872">
    <property type="term" value="F:metal ion binding"/>
    <property type="evidence" value="ECO:0007669"/>
    <property type="project" value="UniProtKB-KW"/>
</dbReference>
<dbReference type="GO" id="GO:0006281">
    <property type="term" value="P:DNA repair"/>
    <property type="evidence" value="ECO:0007669"/>
    <property type="project" value="UniProtKB-KW"/>
</dbReference>
<dbReference type="GO" id="GO:0006260">
    <property type="term" value="P:DNA replication"/>
    <property type="evidence" value="ECO:0007669"/>
    <property type="project" value="UniProtKB-KW"/>
</dbReference>
<dbReference type="CDD" id="cd17748">
    <property type="entry name" value="BRCT_DNA_ligase_like"/>
    <property type="match status" value="1"/>
</dbReference>
<dbReference type="CDD" id="cd00114">
    <property type="entry name" value="LIGANc"/>
    <property type="match status" value="1"/>
</dbReference>
<dbReference type="Gene3D" id="1.10.150.20">
    <property type="entry name" value="5' to 3' exonuclease, C-terminal subdomain"/>
    <property type="match status" value="2"/>
</dbReference>
<dbReference type="Gene3D" id="3.40.50.10190">
    <property type="entry name" value="BRCT domain"/>
    <property type="match status" value="1"/>
</dbReference>
<dbReference type="Gene3D" id="3.30.470.30">
    <property type="entry name" value="DNA ligase/mRNA capping enzyme"/>
    <property type="match status" value="1"/>
</dbReference>
<dbReference type="Gene3D" id="1.10.287.610">
    <property type="entry name" value="Helix hairpin bin"/>
    <property type="match status" value="1"/>
</dbReference>
<dbReference type="Gene3D" id="2.40.50.140">
    <property type="entry name" value="Nucleic acid-binding proteins"/>
    <property type="match status" value="1"/>
</dbReference>
<dbReference type="HAMAP" id="MF_01588">
    <property type="entry name" value="DNA_ligase_A"/>
    <property type="match status" value="1"/>
</dbReference>
<dbReference type="InterPro" id="IPR001357">
    <property type="entry name" value="BRCT_dom"/>
</dbReference>
<dbReference type="InterPro" id="IPR036420">
    <property type="entry name" value="BRCT_dom_sf"/>
</dbReference>
<dbReference type="InterPro" id="IPR041663">
    <property type="entry name" value="DisA/LigA_HHH"/>
</dbReference>
<dbReference type="InterPro" id="IPR001679">
    <property type="entry name" value="DNA_ligase"/>
</dbReference>
<dbReference type="InterPro" id="IPR018239">
    <property type="entry name" value="DNA_ligase_AS"/>
</dbReference>
<dbReference type="InterPro" id="IPR013839">
    <property type="entry name" value="DNAligase_adenylation"/>
</dbReference>
<dbReference type="InterPro" id="IPR013840">
    <property type="entry name" value="DNAligase_N"/>
</dbReference>
<dbReference type="InterPro" id="IPR012340">
    <property type="entry name" value="NA-bd_OB-fold"/>
</dbReference>
<dbReference type="InterPro" id="IPR004150">
    <property type="entry name" value="NAD_DNA_ligase_OB"/>
</dbReference>
<dbReference type="InterPro" id="IPR010994">
    <property type="entry name" value="RuvA_2-like"/>
</dbReference>
<dbReference type="NCBIfam" id="TIGR00575">
    <property type="entry name" value="dnlj"/>
    <property type="match status" value="1"/>
</dbReference>
<dbReference type="NCBIfam" id="NF005932">
    <property type="entry name" value="PRK07956.1"/>
    <property type="match status" value="1"/>
</dbReference>
<dbReference type="PANTHER" id="PTHR23389">
    <property type="entry name" value="CHROMOSOME TRANSMISSION FIDELITY FACTOR 18"/>
    <property type="match status" value="1"/>
</dbReference>
<dbReference type="PANTHER" id="PTHR23389:SF9">
    <property type="entry name" value="DNA LIGASE"/>
    <property type="match status" value="1"/>
</dbReference>
<dbReference type="Pfam" id="PF00533">
    <property type="entry name" value="BRCT"/>
    <property type="match status" value="1"/>
</dbReference>
<dbReference type="Pfam" id="PF01653">
    <property type="entry name" value="DNA_ligase_aden"/>
    <property type="match status" value="1"/>
</dbReference>
<dbReference type="Pfam" id="PF03120">
    <property type="entry name" value="DNA_ligase_OB"/>
    <property type="match status" value="1"/>
</dbReference>
<dbReference type="Pfam" id="PF12826">
    <property type="entry name" value="HHH_2"/>
    <property type="match status" value="1"/>
</dbReference>
<dbReference type="PIRSF" id="PIRSF001604">
    <property type="entry name" value="LigA"/>
    <property type="match status" value="1"/>
</dbReference>
<dbReference type="SMART" id="SM00292">
    <property type="entry name" value="BRCT"/>
    <property type="match status" value="1"/>
</dbReference>
<dbReference type="SMART" id="SM00532">
    <property type="entry name" value="LIGANc"/>
    <property type="match status" value="1"/>
</dbReference>
<dbReference type="SUPFAM" id="SSF52113">
    <property type="entry name" value="BRCT domain"/>
    <property type="match status" value="1"/>
</dbReference>
<dbReference type="SUPFAM" id="SSF56091">
    <property type="entry name" value="DNA ligase/mRNA capping enzyme, catalytic domain"/>
    <property type="match status" value="1"/>
</dbReference>
<dbReference type="SUPFAM" id="SSF50249">
    <property type="entry name" value="Nucleic acid-binding proteins"/>
    <property type="match status" value="1"/>
</dbReference>
<dbReference type="SUPFAM" id="SSF47781">
    <property type="entry name" value="RuvA domain 2-like"/>
    <property type="match status" value="1"/>
</dbReference>
<dbReference type="PROSITE" id="PS50172">
    <property type="entry name" value="BRCT"/>
    <property type="match status" value="1"/>
</dbReference>
<dbReference type="PROSITE" id="PS01055">
    <property type="entry name" value="DNA_LIGASE_N1"/>
    <property type="match status" value="1"/>
</dbReference>
<comment type="function">
    <text evidence="1">DNA ligase that catalyzes the formation of phosphodiester linkages between 5'-phosphoryl and 3'-hydroxyl groups in double-stranded DNA using NAD as a coenzyme and as the energy source for the reaction. It is essential for DNA replication and repair of damaged DNA.</text>
</comment>
<comment type="catalytic activity">
    <reaction evidence="1">
        <text>NAD(+) + (deoxyribonucleotide)n-3'-hydroxyl + 5'-phospho-(deoxyribonucleotide)m = (deoxyribonucleotide)n+m + AMP + beta-nicotinamide D-nucleotide.</text>
        <dbReference type="EC" id="6.5.1.2"/>
    </reaction>
</comment>
<comment type="cofactor">
    <cofactor evidence="1">
        <name>Mg(2+)</name>
        <dbReference type="ChEBI" id="CHEBI:18420"/>
    </cofactor>
    <cofactor evidence="1">
        <name>Mn(2+)</name>
        <dbReference type="ChEBI" id="CHEBI:29035"/>
    </cofactor>
</comment>
<comment type="similarity">
    <text evidence="1">Belongs to the NAD-dependent DNA ligase family. LigA subfamily.</text>
</comment>
<gene>
    <name evidence="1" type="primary">ligA</name>
    <name type="ordered locus">MARTH_orf373</name>
</gene>
<feature type="chain" id="PRO_0000380423" description="DNA ligase">
    <location>
        <begin position="1"/>
        <end position="665"/>
    </location>
</feature>
<feature type="domain" description="BRCT" evidence="1">
    <location>
        <begin position="588"/>
        <end position="665"/>
    </location>
</feature>
<feature type="active site" description="N6-AMP-lysine intermediate" evidence="1">
    <location>
        <position position="119"/>
    </location>
</feature>
<feature type="binding site" evidence="1">
    <location>
        <begin position="35"/>
        <end position="39"/>
    </location>
    <ligand>
        <name>NAD(+)</name>
        <dbReference type="ChEBI" id="CHEBI:57540"/>
    </ligand>
</feature>
<feature type="binding site" evidence="1">
    <location>
        <begin position="88"/>
        <end position="89"/>
    </location>
    <ligand>
        <name>NAD(+)</name>
        <dbReference type="ChEBI" id="CHEBI:57540"/>
    </ligand>
</feature>
<feature type="binding site" evidence="1">
    <location>
        <position position="117"/>
    </location>
    <ligand>
        <name>NAD(+)</name>
        <dbReference type="ChEBI" id="CHEBI:57540"/>
    </ligand>
</feature>
<feature type="binding site" evidence="1">
    <location>
        <position position="140"/>
    </location>
    <ligand>
        <name>NAD(+)</name>
        <dbReference type="ChEBI" id="CHEBI:57540"/>
    </ligand>
</feature>
<feature type="binding site" evidence="1">
    <location>
        <position position="174"/>
    </location>
    <ligand>
        <name>NAD(+)</name>
        <dbReference type="ChEBI" id="CHEBI:57540"/>
    </ligand>
</feature>
<feature type="binding site" evidence="1">
    <location>
        <position position="290"/>
    </location>
    <ligand>
        <name>NAD(+)</name>
        <dbReference type="ChEBI" id="CHEBI:57540"/>
    </ligand>
</feature>
<feature type="binding site" evidence="1">
    <location>
        <position position="314"/>
    </location>
    <ligand>
        <name>NAD(+)</name>
        <dbReference type="ChEBI" id="CHEBI:57540"/>
    </ligand>
</feature>
<feature type="binding site" evidence="1">
    <location>
        <position position="406"/>
    </location>
    <ligand>
        <name>Zn(2+)</name>
        <dbReference type="ChEBI" id="CHEBI:29105"/>
    </ligand>
</feature>
<feature type="binding site" evidence="1">
    <location>
        <position position="409"/>
    </location>
    <ligand>
        <name>Zn(2+)</name>
        <dbReference type="ChEBI" id="CHEBI:29105"/>
    </ligand>
</feature>
<feature type="binding site" evidence="1">
    <location>
        <position position="424"/>
    </location>
    <ligand>
        <name>Zn(2+)</name>
        <dbReference type="ChEBI" id="CHEBI:29105"/>
    </ligand>
</feature>
<feature type="binding site" evidence="1">
    <location>
        <position position="429"/>
    </location>
    <ligand>
        <name>Zn(2+)</name>
        <dbReference type="ChEBI" id="CHEBI:29105"/>
    </ligand>
</feature>
<proteinExistence type="inferred from homology"/>